<organism>
    <name type="scientific">Bacillus cytotoxicus (strain DSM 22905 / CIP 110041 / 391-98 / NVH 391-98)</name>
    <dbReference type="NCBI Taxonomy" id="315749"/>
    <lineage>
        <taxon>Bacteria</taxon>
        <taxon>Bacillati</taxon>
        <taxon>Bacillota</taxon>
        <taxon>Bacilli</taxon>
        <taxon>Bacillales</taxon>
        <taxon>Bacillaceae</taxon>
        <taxon>Bacillus</taxon>
        <taxon>Bacillus cereus group</taxon>
    </lineage>
</organism>
<evidence type="ECO:0000255" key="1">
    <source>
        <dbReference type="HAMAP-Rule" id="MF_01152"/>
    </source>
</evidence>
<name>DNAJ_BACCN</name>
<proteinExistence type="inferred from homology"/>
<sequence>MSKRDYYEVLGVSKSASKDEIKKAYRRLAKKYHPDVSKEENAVEKFKEVQEAYEVLSDEQKRAQYDQFGHAGSSQGFGGGDFGGGFGFEDIFSSFFGGGSRRRDPNAPRQGADLQYQVTLEFEEAIFGKELNVEIPVEDPCDTCHGSGAKPGTTKETCKYCSGTGQISVEQNTPFGRIVNRQTCRHCSGTGQMIKEKCTTCHGTGKVRKRKKINVKIPAGIDNGQQIRVAGKGEAGVNGGPAGDLYVVVHVREHEFFERDGDHIICEMPLTFAQAALGAEVEVPTVHGKVKLKIPAGTQTGTEFRLKGKGAPNVRGYGQGDQYVVVRVVVPTNLTAHQKELLREFAGQEDKDDSLFGKLKRAFKGE</sequence>
<protein>
    <recommendedName>
        <fullName evidence="1">Chaperone protein DnaJ</fullName>
    </recommendedName>
</protein>
<dbReference type="EMBL" id="CP000764">
    <property type="protein sequence ID" value="ABS23265.1"/>
    <property type="molecule type" value="Genomic_DNA"/>
</dbReference>
<dbReference type="RefSeq" id="WP_012095502.1">
    <property type="nucleotide sequence ID" value="NC_009674.1"/>
</dbReference>
<dbReference type="SMR" id="A7GT07"/>
<dbReference type="STRING" id="315749.Bcer98_3039"/>
<dbReference type="GeneID" id="33898285"/>
<dbReference type="KEGG" id="bcy:Bcer98_3039"/>
<dbReference type="eggNOG" id="COG0484">
    <property type="taxonomic scope" value="Bacteria"/>
</dbReference>
<dbReference type="HOGENOM" id="CLU_017633_0_7_9"/>
<dbReference type="OrthoDB" id="9779889at2"/>
<dbReference type="Proteomes" id="UP000002300">
    <property type="component" value="Chromosome"/>
</dbReference>
<dbReference type="GO" id="GO:0005737">
    <property type="term" value="C:cytoplasm"/>
    <property type="evidence" value="ECO:0007669"/>
    <property type="project" value="UniProtKB-SubCell"/>
</dbReference>
<dbReference type="GO" id="GO:0005524">
    <property type="term" value="F:ATP binding"/>
    <property type="evidence" value="ECO:0007669"/>
    <property type="project" value="InterPro"/>
</dbReference>
<dbReference type="GO" id="GO:0031072">
    <property type="term" value="F:heat shock protein binding"/>
    <property type="evidence" value="ECO:0007669"/>
    <property type="project" value="InterPro"/>
</dbReference>
<dbReference type="GO" id="GO:0051082">
    <property type="term" value="F:unfolded protein binding"/>
    <property type="evidence" value="ECO:0007669"/>
    <property type="project" value="UniProtKB-UniRule"/>
</dbReference>
<dbReference type="GO" id="GO:0008270">
    <property type="term" value="F:zinc ion binding"/>
    <property type="evidence" value="ECO:0007669"/>
    <property type="project" value="UniProtKB-UniRule"/>
</dbReference>
<dbReference type="GO" id="GO:0051085">
    <property type="term" value="P:chaperone cofactor-dependent protein refolding"/>
    <property type="evidence" value="ECO:0007669"/>
    <property type="project" value="TreeGrafter"/>
</dbReference>
<dbReference type="GO" id="GO:0006260">
    <property type="term" value="P:DNA replication"/>
    <property type="evidence" value="ECO:0007669"/>
    <property type="project" value="UniProtKB-KW"/>
</dbReference>
<dbReference type="GO" id="GO:0042026">
    <property type="term" value="P:protein refolding"/>
    <property type="evidence" value="ECO:0007669"/>
    <property type="project" value="TreeGrafter"/>
</dbReference>
<dbReference type="GO" id="GO:0009408">
    <property type="term" value="P:response to heat"/>
    <property type="evidence" value="ECO:0007669"/>
    <property type="project" value="InterPro"/>
</dbReference>
<dbReference type="CDD" id="cd06257">
    <property type="entry name" value="DnaJ"/>
    <property type="match status" value="1"/>
</dbReference>
<dbReference type="CDD" id="cd10747">
    <property type="entry name" value="DnaJ_C"/>
    <property type="match status" value="1"/>
</dbReference>
<dbReference type="CDD" id="cd10719">
    <property type="entry name" value="DnaJ_zf"/>
    <property type="match status" value="1"/>
</dbReference>
<dbReference type="FunFam" id="1.10.287.110:FF:000031">
    <property type="entry name" value="Molecular chaperone DnaJ"/>
    <property type="match status" value="1"/>
</dbReference>
<dbReference type="FunFam" id="2.10.230.10:FF:000002">
    <property type="entry name" value="Molecular chaperone DnaJ"/>
    <property type="match status" value="1"/>
</dbReference>
<dbReference type="FunFam" id="2.60.260.20:FF:000004">
    <property type="entry name" value="Molecular chaperone DnaJ"/>
    <property type="match status" value="1"/>
</dbReference>
<dbReference type="FunFam" id="2.60.260.20:FF:000009">
    <property type="entry name" value="Putative Mitochondrial DnaJ chaperone"/>
    <property type="match status" value="1"/>
</dbReference>
<dbReference type="Gene3D" id="1.10.287.110">
    <property type="entry name" value="DnaJ domain"/>
    <property type="match status" value="1"/>
</dbReference>
<dbReference type="Gene3D" id="2.10.230.10">
    <property type="entry name" value="Heat shock protein DnaJ, cysteine-rich domain"/>
    <property type="match status" value="1"/>
</dbReference>
<dbReference type="Gene3D" id="2.60.260.20">
    <property type="entry name" value="Urease metallochaperone UreE, N-terminal domain"/>
    <property type="match status" value="2"/>
</dbReference>
<dbReference type="HAMAP" id="MF_01152">
    <property type="entry name" value="DnaJ"/>
    <property type="match status" value="1"/>
</dbReference>
<dbReference type="InterPro" id="IPR012724">
    <property type="entry name" value="DnaJ"/>
</dbReference>
<dbReference type="InterPro" id="IPR002939">
    <property type="entry name" value="DnaJ_C"/>
</dbReference>
<dbReference type="InterPro" id="IPR001623">
    <property type="entry name" value="DnaJ_domain"/>
</dbReference>
<dbReference type="InterPro" id="IPR018253">
    <property type="entry name" value="DnaJ_domain_CS"/>
</dbReference>
<dbReference type="InterPro" id="IPR008971">
    <property type="entry name" value="HSP40/DnaJ_pept-bd"/>
</dbReference>
<dbReference type="InterPro" id="IPR001305">
    <property type="entry name" value="HSP_DnaJ_Cys-rich_dom"/>
</dbReference>
<dbReference type="InterPro" id="IPR036410">
    <property type="entry name" value="HSP_DnaJ_Cys-rich_dom_sf"/>
</dbReference>
<dbReference type="InterPro" id="IPR036869">
    <property type="entry name" value="J_dom_sf"/>
</dbReference>
<dbReference type="NCBIfam" id="TIGR02349">
    <property type="entry name" value="DnaJ_bact"/>
    <property type="match status" value="1"/>
</dbReference>
<dbReference type="NCBIfam" id="NF008035">
    <property type="entry name" value="PRK10767.1"/>
    <property type="match status" value="1"/>
</dbReference>
<dbReference type="NCBIfam" id="NF010873">
    <property type="entry name" value="PRK14280.1"/>
    <property type="match status" value="1"/>
</dbReference>
<dbReference type="PANTHER" id="PTHR43096:SF48">
    <property type="entry name" value="CHAPERONE PROTEIN DNAJ"/>
    <property type="match status" value="1"/>
</dbReference>
<dbReference type="PANTHER" id="PTHR43096">
    <property type="entry name" value="DNAJ HOMOLOG 1, MITOCHONDRIAL-RELATED"/>
    <property type="match status" value="1"/>
</dbReference>
<dbReference type="Pfam" id="PF00226">
    <property type="entry name" value="DnaJ"/>
    <property type="match status" value="1"/>
</dbReference>
<dbReference type="Pfam" id="PF01556">
    <property type="entry name" value="DnaJ_C"/>
    <property type="match status" value="1"/>
</dbReference>
<dbReference type="Pfam" id="PF00684">
    <property type="entry name" value="DnaJ_CXXCXGXG"/>
    <property type="match status" value="1"/>
</dbReference>
<dbReference type="PRINTS" id="PR00625">
    <property type="entry name" value="JDOMAIN"/>
</dbReference>
<dbReference type="SMART" id="SM00271">
    <property type="entry name" value="DnaJ"/>
    <property type="match status" value="1"/>
</dbReference>
<dbReference type="SUPFAM" id="SSF46565">
    <property type="entry name" value="Chaperone J-domain"/>
    <property type="match status" value="1"/>
</dbReference>
<dbReference type="SUPFAM" id="SSF57938">
    <property type="entry name" value="DnaJ/Hsp40 cysteine-rich domain"/>
    <property type="match status" value="1"/>
</dbReference>
<dbReference type="SUPFAM" id="SSF49493">
    <property type="entry name" value="HSP40/DnaJ peptide-binding domain"/>
    <property type="match status" value="2"/>
</dbReference>
<dbReference type="PROSITE" id="PS00636">
    <property type="entry name" value="DNAJ_1"/>
    <property type="match status" value="1"/>
</dbReference>
<dbReference type="PROSITE" id="PS50076">
    <property type="entry name" value="DNAJ_2"/>
    <property type="match status" value="1"/>
</dbReference>
<dbReference type="PROSITE" id="PS51188">
    <property type="entry name" value="ZF_CR"/>
    <property type="match status" value="1"/>
</dbReference>
<reference key="1">
    <citation type="journal article" date="2008" name="Chem. Biol. Interact.">
        <title>Extending the Bacillus cereus group genomics to putative food-borne pathogens of different toxicity.</title>
        <authorList>
            <person name="Lapidus A."/>
            <person name="Goltsman E."/>
            <person name="Auger S."/>
            <person name="Galleron N."/>
            <person name="Segurens B."/>
            <person name="Dossat C."/>
            <person name="Land M.L."/>
            <person name="Broussolle V."/>
            <person name="Brillard J."/>
            <person name="Guinebretiere M.-H."/>
            <person name="Sanchis V."/>
            <person name="Nguen-the C."/>
            <person name="Lereclus D."/>
            <person name="Richardson P."/>
            <person name="Wincker P."/>
            <person name="Weissenbach J."/>
            <person name="Ehrlich S.D."/>
            <person name="Sorokin A."/>
        </authorList>
    </citation>
    <scope>NUCLEOTIDE SEQUENCE [LARGE SCALE GENOMIC DNA]</scope>
    <source>
        <strain>DSM 22905 / CIP 110041 / 391-98 / NVH 391-98</strain>
    </source>
</reference>
<feature type="chain" id="PRO_1000085146" description="Chaperone protein DnaJ">
    <location>
        <begin position="1"/>
        <end position="366"/>
    </location>
</feature>
<feature type="domain" description="J" evidence="1">
    <location>
        <begin position="5"/>
        <end position="69"/>
    </location>
</feature>
<feature type="repeat" description="CXXCXGXG motif">
    <location>
        <begin position="141"/>
        <end position="148"/>
    </location>
</feature>
<feature type="repeat" description="CXXCXGXG motif">
    <location>
        <begin position="158"/>
        <end position="165"/>
    </location>
</feature>
<feature type="repeat" description="CXXCXGXG motif">
    <location>
        <begin position="184"/>
        <end position="191"/>
    </location>
</feature>
<feature type="repeat" description="CXXCXGXG motif">
    <location>
        <begin position="198"/>
        <end position="205"/>
    </location>
</feature>
<feature type="zinc finger region" description="CR-type" evidence="1">
    <location>
        <begin position="128"/>
        <end position="210"/>
    </location>
</feature>
<feature type="binding site" evidence="1">
    <location>
        <position position="141"/>
    </location>
    <ligand>
        <name>Zn(2+)</name>
        <dbReference type="ChEBI" id="CHEBI:29105"/>
        <label>1</label>
    </ligand>
</feature>
<feature type="binding site" evidence="1">
    <location>
        <position position="144"/>
    </location>
    <ligand>
        <name>Zn(2+)</name>
        <dbReference type="ChEBI" id="CHEBI:29105"/>
        <label>1</label>
    </ligand>
</feature>
<feature type="binding site" evidence="1">
    <location>
        <position position="158"/>
    </location>
    <ligand>
        <name>Zn(2+)</name>
        <dbReference type="ChEBI" id="CHEBI:29105"/>
        <label>2</label>
    </ligand>
</feature>
<feature type="binding site" evidence="1">
    <location>
        <position position="161"/>
    </location>
    <ligand>
        <name>Zn(2+)</name>
        <dbReference type="ChEBI" id="CHEBI:29105"/>
        <label>2</label>
    </ligand>
</feature>
<feature type="binding site" evidence="1">
    <location>
        <position position="184"/>
    </location>
    <ligand>
        <name>Zn(2+)</name>
        <dbReference type="ChEBI" id="CHEBI:29105"/>
        <label>2</label>
    </ligand>
</feature>
<feature type="binding site" evidence="1">
    <location>
        <position position="187"/>
    </location>
    <ligand>
        <name>Zn(2+)</name>
        <dbReference type="ChEBI" id="CHEBI:29105"/>
        <label>2</label>
    </ligand>
</feature>
<feature type="binding site" evidence="1">
    <location>
        <position position="198"/>
    </location>
    <ligand>
        <name>Zn(2+)</name>
        <dbReference type="ChEBI" id="CHEBI:29105"/>
        <label>1</label>
    </ligand>
</feature>
<feature type="binding site" evidence="1">
    <location>
        <position position="201"/>
    </location>
    <ligand>
        <name>Zn(2+)</name>
        <dbReference type="ChEBI" id="CHEBI:29105"/>
        <label>1</label>
    </ligand>
</feature>
<accession>A7GT07</accession>
<gene>
    <name evidence="1" type="primary">dnaJ</name>
    <name type="ordered locus">Bcer98_3039</name>
</gene>
<comment type="function">
    <text evidence="1">Participates actively in the response to hyperosmotic and heat shock by preventing the aggregation of stress-denatured proteins and by disaggregating proteins, also in an autonomous, DnaK-independent fashion. Unfolded proteins bind initially to DnaJ; upon interaction with the DnaJ-bound protein, DnaK hydrolyzes its bound ATP, resulting in the formation of a stable complex. GrpE releases ADP from DnaK; ATP binding to DnaK triggers the release of the substrate protein, thus completing the reaction cycle. Several rounds of ATP-dependent interactions between DnaJ, DnaK and GrpE are required for fully efficient folding. Also involved, together with DnaK and GrpE, in the DNA replication of plasmids through activation of initiation proteins.</text>
</comment>
<comment type="cofactor">
    <cofactor evidence="1">
        <name>Zn(2+)</name>
        <dbReference type="ChEBI" id="CHEBI:29105"/>
    </cofactor>
    <text evidence="1">Binds 2 Zn(2+) ions per monomer.</text>
</comment>
<comment type="subunit">
    <text evidence="1">Homodimer.</text>
</comment>
<comment type="subcellular location">
    <subcellularLocation>
        <location evidence="1">Cytoplasm</location>
    </subcellularLocation>
</comment>
<comment type="domain">
    <text evidence="1">The J domain is necessary and sufficient to stimulate DnaK ATPase activity. Zinc center 1 plays an important role in the autonomous, DnaK-independent chaperone activity of DnaJ. Zinc center 2 is essential for interaction with DnaK and for DnaJ activity.</text>
</comment>
<comment type="similarity">
    <text evidence="1">Belongs to the DnaJ family.</text>
</comment>
<keyword id="KW-0143">Chaperone</keyword>
<keyword id="KW-0963">Cytoplasm</keyword>
<keyword id="KW-0235">DNA replication</keyword>
<keyword id="KW-0479">Metal-binding</keyword>
<keyword id="KW-0677">Repeat</keyword>
<keyword id="KW-0346">Stress response</keyword>
<keyword id="KW-0862">Zinc</keyword>
<keyword id="KW-0863">Zinc-finger</keyword>